<sequence length="203" mass="23272">MEKMVMKMLVIFVFGMNHWTCTGFPVYDYDPASLKEALSASVAKVNSQSLSPYLFRAFRSSIKRVNALDEDSLTMDLEFRIQETTCRRESEADPATCDFQRGYHVPVAVCRSTVRMSAERVQDVWVRCHWSSSSGSSSSEEMFFGDILGSSTSRNSHLLGLTPDRSRGEPLYERSREMRRNFPLGNRRYSNPWPRARVNPGFE</sequence>
<dbReference type="EMBL" id="AJ544160">
    <property type="protein sequence ID" value="CAD66514.3"/>
    <property type="molecule type" value="mRNA"/>
</dbReference>
<dbReference type="RefSeq" id="NP_001009453.1">
    <property type="nucleotide sequence ID" value="NM_001009453.1"/>
</dbReference>
<dbReference type="SMR" id="Q70TH4"/>
<dbReference type="STRING" id="9940.ENSOARP00000020585"/>
<dbReference type="PaxDb" id="9940-ENSOARP00000020585"/>
<dbReference type="GeneID" id="443510"/>
<dbReference type="KEGG" id="oas:443510"/>
<dbReference type="CTD" id="6694"/>
<dbReference type="eggNOG" id="ENOG502S7TB">
    <property type="taxonomic scope" value="Eukaryota"/>
</dbReference>
<dbReference type="OrthoDB" id="9944258at2759"/>
<dbReference type="Proteomes" id="UP000002356">
    <property type="component" value="Unplaced"/>
</dbReference>
<dbReference type="GO" id="GO:0005576">
    <property type="term" value="C:extracellular region"/>
    <property type="evidence" value="ECO:0007669"/>
    <property type="project" value="UniProtKB-SubCell"/>
</dbReference>
<dbReference type="GO" id="GO:0046849">
    <property type="term" value="P:bone remodeling"/>
    <property type="evidence" value="ECO:0007669"/>
    <property type="project" value="InterPro"/>
</dbReference>
<dbReference type="Gene3D" id="3.10.450.10">
    <property type="match status" value="1"/>
</dbReference>
<dbReference type="InterPro" id="IPR046350">
    <property type="entry name" value="Cystatin_sf"/>
</dbReference>
<dbReference type="InterPro" id="IPR010892">
    <property type="entry name" value="Spp-24"/>
</dbReference>
<dbReference type="PANTHER" id="PTHR15444">
    <property type="entry name" value="SECRETED PHOSPHOPROTEIN 24"/>
    <property type="match status" value="1"/>
</dbReference>
<dbReference type="PANTHER" id="PTHR15444:SF4">
    <property type="entry name" value="SECRETED PHOSPHOPROTEIN 24"/>
    <property type="match status" value="1"/>
</dbReference>
<dbReference type="Pfam" id="PF07448">
    <property type="entry name" value="Spp-24"/>
    <property type="match status" value="1"/>
</dbReference>
<dbReference type="SUPFAM" id="SSF54403">
    <property type="entry name" value="Cystatin/monellin"/>
    <property type="match status" value="1"/>
</dbReference>
<gene>
    <name type="primary">SPP2</name>
    <name type="synonym">SPP24</name>
</gene>
<proteinExistence type="evidence at transcript level"/>
<keyword id="KW-1015">Disulfide bond</keyword>
<keyword id="KW-0597">Phosphoprotein</keyword>
<keyword id="KW-1185">Reference proteome</keyword>
<keyword id="KW-0964">Secreted</keyword>
<keyword id="KW-0732">Signal</keyword>
<feature type="signal peptide" evidence="5">
    <location>
        <begin position="1"/>
        <end position="23"/>
    </location>
</feature>
<feature type="chain" id="PRO_0000228610" description="Secreted phosphoprotein 24">
    <location>
        <begin position="24"/>
        <end position="203"/>
    </location>
</feature>
<feature type="region of interest" description="Disordered" evidence="6">
    <location>
        <begin position="155"/>
        <end position="174"/>
    </location>
</feature>
<feature type="compositionally biased region" description="Basic and acidic residues" evidence="6">
    <location>
        <begin position="164"/>
        <end position="174"/>
    </location>
</feature>
<feature type="modified residue" description="Phosphoserine" evidence="2">
    <location>
        <position position="90"/>
    </location>
</feature>
<feature type="modified residue" description="Phosphoserine" evidence="3">
    <location>
        <position position="138"/>
    </location>
</feature>
<feature type="modified residue" description="Phosphoserine" evidence="3">
    <location>
        <position position="139"/>
    </location>
</feature>
<feature type="modified residue" description="Phosphoserine" evidence="4">
    <location>
        <position position="166"/>
    </location>
</feature>
<feature type="modified residue" description="Phosphoserine" evidence="3">
    <location>
        <position position="175"/>
    </location>
</feature>
<feature type="disulfide bond" evidence="1">
    <location>
        <begin position="86"/>
        <end position="97"/>
    </location>
</feature>
<feature type="disulfide bond" evidence="1">
    <location>
        <begin position="110"/>
        <end position="128"/>
    </location>
</feature>
<protein>
    <recommendedName>
        <fullName>Secreted phosphoprotein 24</fullName>
        <shortName>Spp-24</shortName>
    </recommendedName>
    <alternativeName>
        <fullName>Secreted phosphoprotein 2</fullName>
    </alternativeName>
</protein>
<organism>
    <name type="scientific">Ovis aries</name>
    <name type="common">Sheep</name>
    <dbReference type="NCBI Taxonomy" id="9940"/>
    <lineage>
        <taxon>Eukaryota</taxon>
        <taxon>Metazoa</taxon>
        <taxon>Chordata</taxon>
        <taxon>Craniata</taxon>
        <taxon>Vertebrata</taxon>
        <taxon>Euteleostomi</taxon>
        <taxon>Mammalia</taxon>
        <taxon>Eutheria</taxon>
        <taxon>Laurasiatheria</taxon>
        <taxon>Artiodactyla</taxon>
        <taxon>Ruminantia</taxon>
        <taxon>Pecora</taxon>
        <taxon>Bovidae</taxon>
        <taxon>Caprinae</taxon>
        <taxon>Ovis</taxon>
    </lineage>
</organism>
<name>SPP24_SHEEP</name>
<reference key="1">
    <citation type="journal article" date="2004" name="Matrix Biol.">
        <title>Characterization of the human secreted phosphoprotein 24 gene (SPP2) and comparison of the protein sequence in nine species.</title>
        <authorList>
            <person name="Bennett C.S."/>
            <person name="Khorram Khorshid H.R."/>
            <person name="Kitchen J.A."/>
            <person name="Arteta D."/>
            <person name="Dalgleish R."/>
        </authorList>
    </citation>
    <scope>NUCLEOTIDE SEQUENCE [MRNA]</scope>
    <source>
        <tissue>Liver</tissue>
    </source>
</reference>
<accession>Q70TH4</accession>
<comment type="function">
    <text evidence="1">Could coordinate an aspect of bone turnover.</text>
</comment>
<comment type="subcellular location">
    <subcellularLocation>
        <location evidence="1">Secreted</location>
    </subcellularLocation>
</comment>
<comment type="PTM">
    <text evidence="1">Multiply phosphorylated at serine residues.</text>
</comment>
<comment type="PTM">
    <text evidence="1">Phosphorylation sites are present in the extracellular medium.</text>
</comment>
<comment type="similarity">
    <text evidence="7">Belongs to the SPP2 family.</text>
</comment>
<evidence type="ECO:0000250" key="1"/>
<evidence type="ECO:0000250" key="2">
    <source>
        <dbReference type="UniProtKB" id="Q13103"/>
    </source>
</evidence>
<evidence type="ECO:0000250" key="3">
    <source>
        <dbReference type="UniProtKB" id="Q62740"/>
    </source>
</evidence>
<evidence type="ECO:0000250" key="4">
    <source>
        <dbReference type="UniProtKB" id="Q8K1I3"/>
    </source>
</evidence>
<evidence type="ECO:0000255" key="5"/>
<evidence type="ECO:0000256" key="6">
    <source>
        <dbReference type="SAM" id="MobiDB-lite"/>
    </source>
</evidence>
<evidence type="ECO:0000305" key="7"/>